<keyword id="KW-0472">Membrane</keyword>
<keyword id="KW-1185">Reference proteome</keyword>
<keyword id="KW-0812">Transmembrane</keyword>
<keyword id="KW-1133">Transmembrane helix</keyword>
<evidence type="ECO:0000255" key="1"/>
<evidence type="ECO:0000305" key="2"/>
<feature type="chain" id="PRO_0000106658" description="Uncharacterized protein MJ0018">
    <location>
        <begin position="1"/>
        <end position="524"/>
    </location>
</feature>
<feature type="transmembrane region" description="Helical" evidence="1">
    <location>
        <begin position="13"/>
        <end position="33"/>
    </location>
</feature>
<dbReference type="EMBL" id="L77117">
    <property type="protein sequence ID" value="AAB98002.1"/>
    <property type="molecule type" value="Genomic_DNA"/>
</dbReference>
<dbReference type="PIR" id="B64302">
    <property type="entry name" value="B64302"/>
</dbReference>
<dbReference type="RefSeq" id="WP_010869510.1">
    <property type="nucleotide sequence ID" value="NC_000909.1"/>
</dbReference>
<dbReference type="PaxDb" id="243232-MJ_0018"/>
<dbReference type="EnsemblBacteria" id="AAB98002">
    <property type="protein sequence ID" value="AAB98002"/>
    <property type="gene ID" value="MJ_0018"/>
</dbReference>
<dbReference type="GeneID" id="1450856"/>
<dbReference type="KEGG" id="mja:MJ_0018"/>
<dbReference type="eggNOG" id="arCOG09657">
    <property type="taxonomic scope" value="Archaea"/>
</dbReference>
<dbReference type="HOGENOM" id="CLU_519373_0_0_2"/>
<dbReference type="InParanoid" id="Q60324"/>
<dbReference type="OrthoDB" id="378420at2157"/>
<dbReference type="Proteomes" id="UP000000805">
    <property type="component" value="Chromosome"/>
</dbReference>
<dbReference type="GO" id="GO:0016020">
    <property type="term" value="C:membrane"/>
    <property type="evidence" value="ECO:0007669"/>
    <property type="project" value="UniProtKB-SubCell"/>
</dbReference>
<dbReference type="InterPro" id="IPR007166">
    <property type="entry name" value="Class3_signal_pept_motif"/>
</dbReference>
<dbReference type="Pfam" id="PF04021">
    <property type="entry name" value="Class_IIIsignal"/>
    <property type="match status" value="1"/>
</dbReference>
<comment type="subcellular location">
    <subcellularLocation>
        <location evidence="2">Membrane</location>
        <topology evidence="2">Single-pass membrane protein</topology>
    </subcellularLocation>
</comment>
<proteinExistence type="predicted"/>
<accession>Q60324</accession>
<name>Y018_METJA</name>
<organism>
    <name type="scientific">Methanocaldococcus jannaschii (strain ATCC 43067 / DSM 2661 / JAL-1 / JCM 10045 / NBRC 100440)</name>
    <name type="common">Methanococcus jannaschii</name>
    <dbReference type="NCBI Taxonomy" id="243232"/>
    <lineage>
        <taxon>Archaea</taxon>
        <taxon>Methanobacteriati</taxon>
        <taxon>Methanobacteriota</taxon>
        <taxon>Methanomada group</taxon>
        <taxon>Methanococci</taxon>
        <taxon>Methanococcales</taxon>
        <taxon>Methanocaldococcaceae</taxon>
        <taxon>Methanocaldococcus</taxon>
    </lineage>
</organism>
<sequence length="524" mass="56565">MIFKKRKGQLTLEFILLILGMTVVGIVITMGLVEKSPIFIGDKPLEVKKETMGLFINESKFNLTVENTTISNLGNNNTESNNSNNETGGGYLYIRVSGSSKGLITKDLIVSGDAKDVSGDISKTINSKCVEENAIGEVYGDIYLEGSANYKLGNLLCINKFQTYLTGSGSLKVYVPYIQEFIIRDKNSGESQIGGSVSLTVGNTNINRFYVEKITGGAKVKFKDFAINTFETNSGNFGGGAETVFENGRISTMKLGDIVSGGNVKFKNVNIGNMIINNMIGSPTFELSNSTINNMKINKLIGSPKILVEDSSIINSLETDQLGGSDIEVKDGSIIKEITIHGSTGTNGKIFVGYGGKVEKLFVEGNINSRIDLKGFSGLIDVSIGNIAGGGKLYVDNVIGNSISTGIIGNNKGLEIEDSSLSVVNIEGVSNSGSAFIKNTLIYQLKINSLPDWGSDMTLNKVNITKLSINEIRNGKLTIKNSEIGELHITKISGKGKIIVKKSYVNGKYYKKLVIKKSNYKKWS</sequence>
<reference key="1">
    <citation type="journal article" date="1996" name="Science">
        <title>Complete genome sequence of the methanogenic archaeon, Methanococcus jannaschii.</title>
        <authorList>
            <person name="Bult C.J."/>
            <person name="White O."/>
            <person name="Olsen G.J."/>
            <person name="Zhou L."/>
            <person name="Fleischmann R.D."/>
            <person name="Sutton G.G."/>
            <person name="Blake J.A."/>
            <person name="FitzGerald L.M."/>
            <person name="Clayton R.A."/>
            <person name="Gocayne J.D."/>
            <person name="Kerlavage A.R."/>
            <person name="Dougherty B.A."/>
            <person name="Tomb J.-F."/>
            <person name="Adams M.D."/>
            <person name="Reich C.I."/>
            <person name="Overbeek R."/>
            <person name="Kirkness E.F."/>
            <person name="Weinstock K.G."/>
            <person name="Merrick J.M."/>
            <person name="Glodek A."/>
            <person name="Scott J.L."/>
            <person name="Geoghagen N.S.M."/>
            <person name="Weidman J.F."/>
            <person name="Fuhrmann J.L."/>
            <person name="Nguyen D."/>
            <person name="Utterback T.R."/>
            <person name="Kelley J.M."/>
            <person name="Peterson J.D."/>
            <person name="Sadow P.W."/>
            <person name="Hanna M.C."/>
            <person name="Cotton M.D."/>
            <person name="Roberts K.M."/>
            <person name="Hurst M.A."/>
            <person name="Kaine B.P."/>
            <person name="Borodovsky M."/>
            <person name="Klenk H.-P."/>
            <person name="Fraser C.M."/>
            <person name="Smith H.O."/>
            <person name="Woese C.R."/>
            <person name="Venter J.C."/>
        </authorList>
    </citation>
    <scope>NUCLEOTIDE SEQUENCE [LARGE SCALE GENOMIC DNA]</scope>
    <source>
        <strain>ATCC 43067 / DSM 2661 / JAL-1 / JCM 10045 / NBRC 100440</strain>
    </source>
</reference>
<gene>
    <name type="ordered locus">MJ0018</name>
</gene>
<protein>
    <recommendedName>
        <fullName>Uncharacterized protein MJ0018</fullName>
    </recommendedName>
</protein>